<proteinExistence type="evidence at protein level"/>
<dbReference type="EMBL" id="AK013116">
    <property type="protein sequence ID" value="BAB28658.1"/>
    <property type="molecule type" value="mRNA"/>
</dbReference>
<dbReference type="CCDS" id="CCDS50743.1"/>
<dbReference type="RefSeq" id="NP_081290.1">
    <property type="nucleotide sequence ID" value="NM_027014.1"/>
</dbReference>
<dbReference type="SMR" id="Q9CZ15"/>
<dbReference type="BioGRID" id="213326">
    <property type="interactions" value="2"/>
</dbReference>
<dbReference type="ComplexPortal" id="CPX-4502">
    <property type="entry name" value="GINS complex"/>
</dbReference>
<dbReference type="FunCoup" id="Q9CZ15">
    <property type="interactions" value="2248"/>
</dbReference>
<dbReference type="STRING" id="10090.ENSMUSP00000028948"/>
<dbReference type="iPTMnet" id="Q9CZ15"/>
<dbReference type="PhosphoSitePlus" id="Q9CZ15"/>
<dbReference type="PaxDb" id="10090-ENSMUSP00000028948"/>
<dbReference type="PeptideAtlas" id="Q9CZ15"/>
<dbReference type="ProteomicsDB" id="301863"/>
<dbReference type="Pumba" id="Q9CZ15"/>
<dbReference type="Antibodypedia" id="10061">
    <property type="antibodies" value="190 antibodies from 27 providers"/>
</dbReference>
<dbReference type="Ensembl" id="ENSMUST00000028948.5">
    <property type="protein sequence ID" value="ENSMUSP00000028948.5"/>
    <property type="gene ID" value="ENSMUSG00000027454.11"/>
</dbReference>
<dbReference type="GeneID" id="69270"/>
<dbReference type="KEGG" id="mmu:69270"/>
<dbReference type="UCSC" id="uc008mus.2">
    <property type="organism name" value="mouse"/>
</dbReference>
<dbReference type="AGR" id="MGI:1916520"/>
<dbReference type="CTD" id="9837"/>
<dbReference type="MGI" id="MGI:1916520">
    <property type="gene designation" value="Gins1"/>
</dbReference>
<dbReference type="VEuPathDB" id="HostDB:ENSMUSG00000027454"/>
<dbReference type="eggNOG" id="KOG3303">
    <property type="taxonomic scope" value="Eukaryota"/>
</dbReference>
<dbReference type="GeneTree" id="ENSGT00390000013968"/>
<dbReference type="HOGENOM" id="CLU_079191_1_1_1"/>
<dbReference type="InParanoid" id="Q9CZ15"/>
<dbReference type="OMA" id="MFCEKAT"/>
<dbReference type="OrthoDB" id="10252587at2759"/>
<dbReference type="PhylomeDB" id="Q9CZ15"/>
<dbReference type="TreeFam" id="TF312848"/>
<dbReference type="Reactome" id="R-MMU-176974">
    <property type="pathway name" value="Unwinding of DNA"/>
</dbReference>
<dbReference type="BioGRID-ORCS" id="69270">
    <property type="hits" value="23 hits in 80 CRISPR screens"/>
</dbReference>
<dbReference type="ChiTaRS" id="Tap1">
    <property type="organism name" value="mouse"/>
</dbReference>
<dbReference type="PRO" id="PR:Q9CZ15"/>
<dbReference type="Proteomes" id="UP000000589">
    <property type="component" value="Chromosome 2"/>
</dbReference>
<dbReference type="RNAct" id="Q9CZ15">
    <property type="molecule type" value="protein"/>
</dbReference>
<dbReference type="Bgee" id="ENSMUSG00000027454">
    <property type="expression patterns" value="Expressed in 1st arch mandibular component and 203 other cell types or tissues"/>
</dbReference>
<dbReference type="GO" id="GO:0071162">
    <property type="term" value="C:CMG complex"/>
    <property type="evidence" value="ECO:0000250"/>
    <property type="project" value="UniProtKB"/>
</dbReference>
<dbReference type="GO" id="GO:0005737">
    <property type="term" value="C:cytoplasm"/>
    <property type="evidence" value="ECO:0000314"/>
    <property type="project" value="MGI"/>
</dbReference>
<dbReference type="GO" id="GO:0000811">
    <property type="term" value="C:GINS complex"/>
    <property type="evidence" value="ECO:0000266"/>
    <property type="project" value="ComplexPortal"/>
</dbReference>
<dbReference type="GO" id="GO:0005634">
    <property type="term" value="C:nucleus"/>
    <property type="evidence" value="ECO:0000314"/>
    <property type="project" value="MGI"/>
</dbReference>
<dbReference type="GO" id="GO:0006260">
    <property type="term" value="P:DNA replication"/>
    <property type="evidence" value="ECO:0000315"/>
    <property type="project" value="MGI"/>
</dbReference>
<dbReference type="GO" id="GO:0001833">
    <property type="term" value="P:inner cell mass cell proliferation"/>
    <property type="evidence" value="ECO:0000315"/>
    <property type="project" value="MGI"/>
</dbReference>
<dbReference type="CDD" id="cd11710">
    <property type="entry name" value="GINS_A_psf1"/>
    <property type="match status" value="1"/>
</dbReference>
<dbReference type="CDD" id="cd21696">
    <property type="entry name" value="GINS_B_Psf1"/>
    <property type="match status" value="1"/>
</dbReference>
<dbReference type="FunFam" id="1.20.58.1030:FF:000001">
    <property type="entry name" value="DNA replication complex GINS protein PSF1"/>
    <property type="match status" value="1"/>
</dbReference>
<dbReference type="Gene3D" id="1.20.58.1030">
    <property type="match status" value="1"/>
</dbReference>
<dbReference type="InterPro" id="IPR021151">
    <property type="entry name" value="GINS_A"/>
</dbReference>
<dbReference type="InterPro" id="IPR036224">
    <property type="entry name" value="GINS_bundle-like_dom_sf"/>
</dbReference>
<dbReference type="InterPro" id="IPR005339">
    <property type="entry name" value="GINS_Psf1"/>
</dbReference>
<dbReference type="InterPro" id="IPR056783">
    <property type="entry name" value="PSF1_C"/>
</dbReference>
<dbReference type="PANTHER" id="PTHR12914:SF2">
    <property type="entry name" value="DNA REPLICATION COMPLEX GINS PROTEIN PSF1"/>
    <property type="match status" value="1"/>
</dbReference>
<dbReference type="PANTHER" id="PTHR12914">
    <property type="entry name" value="PARTNER OF SLD5"/>
    <property type="match status" value="1"/>
</dbReference>
<dbReference type="Pfam" id="PF24997">
    <property type="entry name" value="PSF1_C"/>
    <property type="match status" value="1"/>
</dbReference>
<dbReference type="Pfam" id="PF05916">
    <property type="entry name" value="Sld5"/>
    <property type="match status" value="1"/>
</dbReference>
<dbReference type="SUPFAM" id="SSF158573">
    <property type="entry name" value="GINS helical bundle-like"/>
    <property type="match status" value="1"/>
</dbReference>
<gene>
    <name type="primary">Gins1</name>
    <name type="synonym">Psf1</name>
</gene>
<protein>
    <recommendedName>
        <fullName>DNA replication complex GINS protein PSF1</fullName>
    </recommendedName>
    <alternativeName>
        <fullName>GINS complex subunit 1</fullName>
    </alternativeName>
</protein>
<reference key="1">
    <citation type="journal article" date="2005" name="Science">
        <title>The transcriptional landscape of the mammalian genome.</title>
        <authorList>
            <person name="Carninci P."/>
            <person name="Kasukawa T."/>
            <person name="Katayama S."/>
            <person name="Gough J."/>
            <person name="Frith M.C."/>
            <person name="Maeda N."/>
            <person name="Oyama R."/>
            <person name="Ravasi T."/>
            <person name="Lenhard B."/>
            <person name="Wells C."/>
            <person name="Kodzius R."/>
            <person name="Shimokawa K."/>
            <person name="Bajic V.B."/>
            <person name="Brenner S.E."/>
            <person name="Batalov S."/>
            <person name="Forrest A.R."/>
            <person name="Zavolan M."/>
            <person name="Davis M.J."/>
            <person name="Wilming L.G."/>
            <person name="Aidinis V."/>
            <person name="Allen J.E."/>
            <person name="Ambesi-Impiombato A."/>
            <person name="Apweiler R."/>
            <person name="Aturaliya R.N."/>
            <person name="Bailey T.L."/>
            <person name="Bansal M."/>
            <person name="Baxter L."/>
            <person name="Beisel K.W."/>
            <person name="Bersano T."/>
            <person name="Bono H."/>
            <person name="Chalk A.M."/>
            <person name="Chiu K.P."/>
            <person name="Choudhary V."/>
            <person name="Christoffels A."/>
            <person name="Clutterbuck D.R."/>
            <person name="Crowe M.L."/>
            <person name="Dalla E."/>
            <person name="Dalrymple B.P."/>
            <person name="de Bono B."/>
            <person name="Della Gatta G."/>
            <person name="di Bernardo D."/>
            <person name="Down T."/>
            <person name="Engstrom P."/>
            <person name="Fagiolini M."/>
            <person name="Faulkner G."/>
            <person name="Fletcher C.F."/>
            <person name="Fukushima T."/>
            <person name="Furuno M."/>
            <person name="Futaki S."/>
            <person name="Gariboldi M."/>
            <person name="Georgii-Hemming P."/>
            <person name="Gingeras T.R."/>
            <person name="Gojobori T."/>
            <person name="Green R.E."/>
            <person name="Gustincich S."/>
            <person name="Harbers M."/>
            <person name="Hayashi Y."/>
            <person name="Hensch T.K."/>
            <person name="Hirokawa N."/>
            <person name="Hill D."/>
            <person name="Huminiecki L."/>
            <person name="Iacono M."/>
            <person name="Ikeo K."/>
            <person name="Iwama A."/>
            <person name="Ishikawa T."/>
            <person name="Jakt M."/>
            <person name="Kanapin A."/>
            <person name="Katoh M."/>
            <person name="Kawasawa Y."/>
            <person name="Kelso J."/>
            <person name="Kitamura H."/>
            <person name="Kitano H."/>
            <person name="Kollias G."/>
            <person name="Krishnan S.P."/>
            <person name="Kruger A."/>
            <person name="Kummerfeld S.K."/>
            <person name="Kurochkin I.V."/>
            <person name="Lareau L.F."/>
            <person name="Lazarevic D."/>
            <person name="Lipovich L."/>
            <person name="Liu J."/>
            <person name="Liuni S."/>
            <person name="McWilliam S."/>
            <person name="Madan Babu M."/>
            <person name="Madera M."/>
            <person name="Marchionni L."/>
            <person name="Matsuda H."/>
            <person name="Matsuzawa S."/>
            <person name="Miki H."/>
            <person name="Mignone F."/>
            <person name="Miyake S."/>
            <person name="Morris K."/>
            <person name="Mottagui-Tabar S."/>
            <person name="Mulder N."/>
            <person name="Nakano N."/>
            <person name="Nakauchi H."/>
            <person name="Ng P."/>
            <person name="Nilsson R."/>
            <person name="Nishiguchi S."/>
            <person name="Nishikawa S."/>
            <person name="Nori F."/>
            <person name="Ohara O."/>
            <person name="Okazaki Y."/>
            <person name="Orlando V."/>
            <person name="Pang K.C."/>
            <person name="Pavan W.J."/>
            <person name="Pavesi G."/>
            <person name="Pesole G."/>
            <person name="Petrovsky N."/>
            <person name="Piazza S."/>
            <person name="Reed J."/>
            <person name="Reid J.F."/>
            <person name="Ring B.Z."/>
            <person name="Ringwald M."/>
            <person name="Rost B."/>
            <person name="Ruan Y."/>
            <person name="Salzberg S.L."/>
            <person name="Sandelin A."/>
            <person name="Schneider C."/>
            <person name="Schoenbach C."/>
            <person name="Sekiguchi K."/>
            <person name="Semple C.A."/>
            <person name="Seno S."/>
            <person name="Sessa L."/>
            <person name="Sheng Y."/>
            <person name="Shibata Y."/>
            <person name="Shimada H."/>
            <person name="Shimada K."/>
            <person name="Silva D."/>
            <person name="Sinclair B."/>
            <person name="Sperling S."/>
            <person name="Stupka E."/>
            <person name="Sugiura K."/>
            <person name="Sultana R."/>
            <person name="Takenaka Y."/>
            <person name="Taki K."/>
            <person name="Tammoja K."/>
            <person name="Tan S.L."/>
            <person name="Tang S."/>
            <person name="Taylor M.S."/>
            <person name="Tegner J."/>
            <person name="Teichmann S.A."/>
            <person name="Ueda H.R."/>
            <person name="van Nimwegen E."/>
            <person name="Verardo R."/>
            <person name="Wei C.L."/>
            <person name="Yagi K."/>
            <person name="Yamanishi H."/>
            <person name="Zabarovsky E."/>
            <person name="Zhu S."/>
            <person name="Zimmer A."/>
            <person name="Hide W."/>
            <person name="Bult C."/>
            <person name="Grimmond S.M."/>
            <person name="Teasdale R.D."/>
            <person name="Liu E.T."/>
            <person name="Brusic V."/>
            <person name="Quackenbush J."/>
            <person name="Wahlestedt C."/>
            <person name="Mattick J.S."/>
            <person name="Hume D.A."/>
            <person name="Kai C."/>
            <person name="Sasaki D."/>
            <person name="Tomaru Y."/>
            <person name="Fukuda S."/>
            <person name="Kanamori-Katayama M."/>
            <person name="Suzuki M."/>
            <person name="Aoki J."/>
            <person name="Arakawa T."/>
            <person name="Iida J."/>
            <person name="Imamura K."/>
            <person name="Itoh M."/>
            <person name="Kato T."/>
            <person name="Kawaji H."/>
            <person name="Kawagashira N."/>
            <person name="Kawashima T."/>
            <person name="Kojima M."/>
            <person name="Kondo S."/>
            <person name="Konno H."/>
            <person name="Nakano K."/>
            <person name="Ninomiya N."/>
            <person name="Nishio T."/>
            <person name="Okada M."/>
            <person name="Plessy C."/>
            <person name="Shibata K."/>
            <person name="Shiraki T."/>
            <person name="Suzuki S."/>
            <person name="Tagami M."/>
            <person name="Waki K."/>
            <person name="Watahiki A."/>
            <person name="Okamura-Oho Y."/>
            <person name="Suzuki H."/>
            <person name="Kawai J."/>
            <person name="Hayashizaki Y."/>
        </authorList>
    </citation>
    <scope>NUCLEOTIDE SEQUENCE [LARGE SCALE MRNA]</scope>
    <source>
        <strain>C57BL/6J</strain>
    </source>
</reference>
<reference key="2">
    <citation type="journal article" date="2010" name="Cell">
        <title>A tissue-specific atlas of mouse protein phosphorylation and expression.</title>
        <authorList>
            <person name="Huttlin E.L."/>
            <person name="Jedrychowski M.P."/>
            <person name="Elias J.E."/>
            <person name="Goswami T."/>
            <person name="Rad R."/>
            <person name="Beausoleil S.A."/>
            <person name="Villen J."/>
            <person name="Haas W."/>
            <person name="Sowa M.E."/>
            <person name="Gygi S.P."/>
        </authorList>
    </citation>
    <scope>IDENTIFICATION BY MASS SPECTROMETRY [LARGE SCALE ANALYSIS]</scope>
    <source>
        <tissue>Spleen</tissue>
        <tissue>Testis</tissue>
    </source>
</reference>
<organism>
    <name type="scientific">Mus musculus</name>
    <name type="common">Mouse</name>
    <dbReference type="NCBI Taxonomy" id="10090"/>
    <lineage>
        <taxon>Eukaryota</taxon>
        <taxon>Metazoa</taxon>
        <taxon>Chordata</taxon>
        <taxon>Craniata</taxon>
        <taxon>Vertebrata</taxon>
        <taxon>Euteleostomi</taxon>
        <taxon>Mammalia</taxon>
        <taxon>Eutheria</taxon>
        <taxon>Euarchontoglires</taxon>
        <taxon>Glires</taxon>
        <taxon>Rodentia</taxon>
        <taxon>Myomorpha</taxon>
        <taxon>Muroidea</taxon>
        <taxon>Muridae</taxon>
        <taxon>Murinae</taxon>
        <taxon>Mus</taxon>
        <taxon>Mus</taxon>
    </lineage>
</organism>
<feature type="chain" id="PRO_0000219036" description="DNA replication complex GINS protein PSF1">
    <location>
        <begin position="1"/>
        <end position="196"/>
    </location>
</feature>
<comment type="function">
    <text evidence="1">Required for correct functioning of the GINS complex, a complex that plays an essential role in the initiation of DNA replication, and progression of DNA replication forks. GINS complex is a core component of CDC45-MCM-GINS (CMG) helicase, the molecular machine that unwinds template DNA during replication, and around which the replisome is built.</text>
</comment>
<comment type="subunit">
    <text evidence="1">Component of the GINS complex which is a heterotetramer of GINS1, GINS2, GINS3 and GINS4. Forms a stable subcomplex with GINS4. GINS complex interacts with DNA primase in vitro. Component of the CMG helicase complex, a hexameric ring of related MCM2-7 subunits stabilized by CDC45 and the tetrameric GINS complex.</text>
</comment>
<comment type="subcellular location">
    <subcellularLocation>
        <location evidence="1">Nucleus</location>
    </subcellularLocation>
    <subcellularLocation>
        <location evidence="1">Chromosome</location>
    </subcellularLocation>
    <text evidence="1">Associates with chromatin.</text>
</comment>
<comment type="similarity">
    <text evidence="2">Belongs to the GINS1/PSF1 family.</text>
</comment>
<keyword id="KW-0158">Chromosome</keyword>
<keyword id="KW-0235">DNA replication</keyword>
<keyword id="KW-0539">Nucleus</keyword>
<keyword id="KW-1185">Reference proteome</keyword>
<evidence type="ECO:0000250" key="1">
    <source>
        <dbReference type="UniProtKB" id="Q14691"/>
    </source>
</evidence>
<evidence type="ECO:0000305" key="2"/>
<sequence>MFCEKAMELVRELHRAPEGQLPAFNEDGLRQVLEEMKALYEQNQSDVNEAKSAGRGDLIPTVKFRHCALLRNRRCTIAYLYDRLLRIRALRWEYGSVLPNSLRFHMSAEETEWFNHYKKSLATYMRSLGGDEGLDITQDVKPPKSLYIEVRCLKDYGEFEVDDGTSVLLKKNSQHFLPRWKCEQLIRQGVLEHVLS</sequence>
<name>PSF1_MOUSE</name>
<accession>Q9CZ15</accession>